<reference key="1">
    <citation type="submission" date="2007-02" db="EMBL/GenBank/DDBJ databases">
        <title>Complete sequence of chromosome of Shewanella baltica OS155.</title>
        <authorList>
            <consortium name="US DOE Joint Genome Institute"/>
            <person name="Copeland A."/>
            <person name="Lucas S."/>
            <person name="Lapidus A."/>
            <person name="Barry K."/>
            <person name="Detter J.C."/>
            <person name="Glavina del Rio T."/>
            <person name="Hammon N."/>
            <person name="Israni S."/>
            <person name="Dalin E."/>
            <person name="Tice H."/>
            <person name="Pitluck S."/>
            <person name="Sims D.R."/>
            <person name="Brettin T."/>
            <person name="Bruce D."/>
            <person name="Han C."/>
            <person name="Tapia R."/>
            <person name="Brainard J."/>
            <person name="Schmutz J."/>
            <person name="Larimer F."/>
            <person name="Land M."/>
            <person name="Hauser L."/>
            <person name="Kyrpides N."/>
            <person name="Mikhailova N."/>
            <person name="Brettar I."/>
            <person name="Klappenbach J."/>
            <person name="Konstantinidis K."/>
            <person name="Rodrigues J."/>
            <person name="Tiedje J."/>
            <person name="Richardson P."/>
        </authorList>
    </citation>
    <scope>NUCLEOTIDE SEQUENCE [LARGE SCALE GENOMIC DNA]</scope>
    <source>
        <strain>OS155 / ATCC BAA-1091</strain>
    </source>
</reference>
<organism>
    <name type="scientific">Shewanella baltica (strain OS155 / ATCC BAA-1091)</name>
    <dbReference type="NCBI Taxonomy" id="325240"/>
    <lineage>
        <taxon>Bacteria</taxon>
        <taxon>Pseudomonadati</taxon>
        <taxon>Pseudomonadota</taxon>
        <taxon>Gammaproteobacteria</taxon>
        <taxon>Alteromonadales</taxon>
        <taxon>Shewanellaceae</taxon>
        <taxon>Shewanella</taxon>
    </lineage>
</organism>
<dbReference type="EC" id="3.5.2.3" evidence="1"/>
<dbReference type="EMBL" id="CP000563">
    <property type="protein sequence ID" value="ABN62822.1"/>
    <property type="molecule type" value="Genomic_DNA"/>
</dbReference>
<dbReference type="RefSeq" id="WP_011847584.1">
    <property type="nucleotide sequence ID" value="NC_009052.1"/>
</dbReference>
<dbReference type="SMR" id="A3D7V9"/>
<dbReference type="STRING" id="325240.Sbal_3344"/>
<dbReference type="KEGG" id="sbl:Sbal_3344"/>
<dbReference type="HOGENOM" id="CLU_041558_1_0_6"/>
<dbReference type="OrthoDB" id="9808095at2"/>
<dbReference type="UniPathway" id="UPA00070">
    <property type="reaction ID" value="UER00117"/>
</dbReference>
<dbReference type="Proteomes" id="UP000001557">
    <property type="component" value="Chromosome"/>
</dbReference>
<dbReference type="GO" id="GO:0005829">
    <property type="term" value="C:cytosol"/>
    <property type="evidence" value="ECO:0007669"/>
    <property type="project" value="TreeGrafter"/>
</dbReference>
<dbReference type="GO" id="GO:0004151">
    <property type="term" value="F:dihydroorotase activity"/>
    <property type="evidence" value="ECO:0007669"/>
    <property type="project" value="UniProtKB-UniRule"/>
</dbReference>
<dbReference type="GO" id="GO:0008270">
    <property type="term" value="F:zinc ion binding"/>
    <property type="evidence" value="ECO:0007669"/>
    <property type="project" value="UniProtKB-UniRule"/>
</dbReference>
<dbReference type="GO" id="GO:0006207">
    <property type="term" value="P:'de novo' pyrimidine nucleobase biosynthetic process"/>
    <property type="evidence" value="ECO:0007669"/>
    <property type="project" value="TreeGrafter"/>
</dbReference>
<dbReference type="GO" id="GO:0044205">
    <property type="term" value="P:'de novo' UMP biosynthetic process"/>
    <property type="evidence" value="ECO:0007669"/>
    <property type="project" value="UniProtKB-UniRule"/>
</dbReference>
<dbReference type="CDD" id="cd01294">
    <property type="entry name" value="DHOase"/>
    <property type="match status" value="1"/>
</dbReference>
<dbReference type="FunFam" id="3.20.20.140:FF:000006">
    <property type="entry name" value="Dihydroorotase"/>
    <property type="match status" value="1"/>
</dbReference>
<dbReference type="Gene3D" id="3.20.20.140">
    <property type="entry name" value="Metal-dependent hydrolases"/>
    <property type="match status" value="1"/>
</dbReference>
<dbReference type="HAMAP" id="MF_00219">
    <property type="entry name" value="PyrC_classII"/>
    <property type="match status" value="1"/>
</dbReference>
<dbReference type="InterPro" id="IPR006680">
    <property type="entry name" value="Amidohydro-rel"/>
</dbReference>
<dbReference type="InterPro" id="IPR004721">
    <property type="entry name" value="DHOdimr"/>
</dbReference>
<dbReference type="InterPro" id="IPR002195">
    <property type="entry name" value="Dihydroorotase_CS"/>
</dbReference>
<dbReference type="InterPro" id="IPR032466">
    <property type="entry name" value="Metal_Hydrolase"/>
</dbReference>
<dbReference type="NCBIfam" id="TIGR00856">
    <property type="entry name" value="pyrC_dimer"/>
    <property type="match status" value="1"/>
</dbReference>
<dbReference type="PANTHER" id="PTHR43137">
    <property type="entry name" value="DIHYDROOROTASE"/>
    <property type="match status" value="1"/>
</dbReference>
<dbReference type="PANTHER" id="PTHR43137:SF1">
    <property type="entry name" value="DIHYDROOROTASE"/>
    <property type="match status" value="1"/>
</dbReference>
<dbReference type="Pfam" id="PF01979">
    <property type="entry name" value="Amidohydro_1"/>
    <property type="match status" value="1"/>
</dbReference>
<dbReference type="PIRSF" id="PIRSF001237">
    <property type="entry name" value="DHOdimr"/>
    <property type="match status" value="1"/>
</dbReference>
<dbReference type="SUPFAM" id="SSF51556">
    <property type="entry name" value="Metallo-dependent hydrolases"/>
    <property type="match status" value="1"/>
</dbReference>
<dbReference type="PROSITE" id="PS00482">
    <property type="entry name" value="DIHYDROOROTASE_1"/>
    <property type="match status" value="1"/>
</dbReference>
<dbReference type="PROSITE" id="PS00483">
    <property type="entry name" value="DIHYDROOROTASE_2"/>
    <property type="match status" value="1"/>
</dbReference>
<accession>A3D7V9</accession>
<protein>
    <recommendedName>
        <fullName evidence="1">Dihydroorotase</fullName>
        <shortName evidence="1">DHOase</shortName>
        <ecNumber evidence="1">3.5.2.3</ecNumber>
    </recommendedName>
</protein>
<proteinExistence type="inferred from homology"/>
<keyword id="KW-0378">Hydrolase</keyword>
<keyword id="KW-0479">Metal-binding</keyword>
<keyword id="KW-0665">Pyrimidine biosynthesis</keyword>
<keyword id="KW-1185">Reference proteome</keyword>
<keyword id="KW-0862">Zinc</keyword>
<sequence>MTTITITRPDDWHIHLRDGAQLKDTVRDISRYMGRAIVMPNLVPPAIDTETALTYYDRIKAQVPAGSQFEPLMVLYLTDKTSPDEIRKAKASGKIVAAKLYPAGATTNSDSGVTELKNIYPALEAMQEVGMLFLVHGEVTDSSIDIFDRERVFIENILSKIVADFPELKIVLEHITTKDAVDFVTQASDNVAATITAHHLLYNRNHMLAGGIRPHFYCLPILKRNTHQQALLAAAASGSKKFFLGTDSAPHAKDKKEAACGCAGSYTAHAAIELYAEAFESVNALDKLEAFASFNGPDFYNLPRNADTITLVKKPWNVPATYPLGDTNVVPIRAGEAIDWQVE</sequence>
<name>PYRC_SHEB5</name>
<evidence type="ECO:0000255" key="1">
    <source>
        <dbReference type="HAMAP-Rule" id="MF_00219"/>
    </source>
</evidence>
<comment type="function">
    <text evidence="1">Catalyzes the reversible cyclization of carbamoyl aspartate to dihydroorotate.</text>
</comment>
<comment type="catalytic activity">
    <reaction evidence="1">
        <text>(S)-dihydroorotate + H2O = N-carbamoyl-L-aspartate + H(+)</text>
        <dbReference type="Rhea" id="RHEA:24296"/>
        <dbReference type="ChEBI" id="CHEBI:15377"/>
        <dbReference type="ChEBI" id="CHEBI:15378"/>
        <dbReference type="ChEBI" id="CHEBI:30864"/>
        <dbReference type="ChEBI" id="CHEBI:32814"/>
        <dbReference type="EC" id="3.5.2.3"/>
    </reaction>
</comment>
<comment type="cofactor">
    <cofactor evidence="1">
        <name>Zn(2+)</name>
        <dbReference type="ChEBI" id="CHEBI:29105"/>
    </cofactor>
    <text evidence="1">Binds 2 Zn(2+) ions per subunit.</text>
</comment>
<comment type="pathway">
    <text evidence="1">Pyrimidine metabolism; UMP biosynthesis via de novo pathway; (S)-dihydroorotate from bicarbonate: step 3/3.</text>
</comment>
<comment type="subunit">
    <text evidence="1">Homodimer.</text>
</comment>
<comment type="similarity">
    <text evidence="1">Belongs to the metallo-dependent hydrolases superfamily. DHOase family. Class II DHOase subfamily.</text>
</comment>
<gene>
    <name evidence="1" type="primary">pyrC</name>
    <name type="ordered locus">Sbal_3344</name>
</gene>
<feature type="chain" id="PRO_1000024051" description="Dihydroorotase">
    <location>
        <begin position="1"/>
        <end position="343"/>
    </location>
</feature>
<feature type="active site" evidence="1">
    <location>
        <position position="247"/>
    </location>
</feature>
<feature type="binding site" evidence="1">
    <location>
        <position position="13"/>
    </location>
    <ligand>
        <name>Zn(2+)</name>
        <dbReference type="ChEBI" id="CHEBI:29105"/>
        <label>1</label>
    </ligand>
</feature>
<feature type="binding site" evidence="1">
    <location>
        <begin position="15"/>
        <end position="17"/>
    </location>
    <ligand>
        <name>substrate</name>
    </ligand>
</feature>
<feature type="binding site" evidence="1">
    <location>
        <position position="15"/>
    </location>
    <ligand>
        <name>Zn(2+)</name>
        <dbReference type="ChEBI" id="CHEBI:29105"/>
        <label>1</label>
    </ligand>
</feature>
<feature type="binding site" evidence="1">
    <location>
        <position position="41"/>
    </location>
    <ligand>
        <name>substrate</name>
    </ligand>
</feature>
<feature type="binding site" description="via carbamate group" evidence="1">
    <location>
        <position position="99"/>
    </location>
    <ligand>
        <name>Zn(2+)</name>
        <dbReference type="ChEBI" id="CHEBI:29105"/>
        <label>1</label>
    </ligand>
</feature>
<feature type="binding site" description="via carbamate group" evidence="1">
    <location>
        <position position="99"/>
    </location>
    <ligand>
        <name>Zn(2+)</name>
        <dbReference type="ChEBI" id="CHEBI:29105"/>
        <label>2</label>
    </ligand>
</feature>
<feature type="binding site" evidence="1">
    <location>
        <position position="136"/>
    </location>
    <ligand>
        <name>substrate</name>
    </ligand>
</feature>
<feature type="binding site" evidence="1">
    <location>
        <position position="136"/>
    </location>
    <ligand>
        <name>Zn(2+)</name>
        <dbReference type="ChEBI" id="CHEBI:29105"/>
        <label>2</label>
    </ligand>
</feature>
<feature type="binding site" evidence="1">
    <location>
        <position position="174"/>
    </location>
    <ligand>
        <name>Zn(2+)</name>
        <dbReference type="ChEBI" id="CHEBI:29105"/>
        <label>2</label>
    </ligand>
</feature>
<feature type="binding site" evidence="1">
    <location>
        <position position="219"/>
    </location>
    <ligand>
        <name>substrate</name>
    </ligand>
</feature>
<feature type="binding site" evidence="1">
    <location>
        <position position="247"/>
    </location>
    <ligand>
        <name>Zn(2+)</name>
        <dbReference type="ChEBI" id="CHEBI:29105"/>
        <label>1</label>
    </ligand>
</feature>
<feature type="binding site" evidence="1">
    <location>
        <position position="251"/>
    </location>
    <ligand>
        <name>substrate</name>
    </ligand>
</feature>
<feature type="binding site" evidence="1">
    <location>
        <position position="263"/>
    </location>
    <ligand>
        <name>substrate</name>
    </ligand>
</feature>
<feature type="modified residue" description="N6-carboxylysine" evidence="1">
    <location>
        <position position="99"/>
    </location>
</feature>